<name>DF171_ARATH</name>
<accession>P82775</accession>
<accession>Q4VNZ4</accession>
<proteinExistence type="inferred from homology"/>
<comment type="subcellular location">
    <subcellularLocation>
        <location evidence="1">Secreted</location>
    </subcellularLocation>
</comment>
<comment type="similarity">
    <text evidence="4">Belongs to the DEFL family.</text>
</comment>
<dbReference type="EMBL" id="AL078464">
    <property type="status" value="NOT_ANNOTATED_CDS"/>
    <property type="molecule type" value="Genomic_DNA"/>
</dbReference>
<dbReference type="EMBL" id="AL161576">
    <property type="status" value="NOT_ANNOTATED_CDS"/>
    <property type="molecule type" value="Genomic_DNA"/>
</dbReference>
<dbReference type="EMBL" id="CP002687">
    <property type="protein sequence ID" value="AEE85714.1"/>
    <property type="molecule type" value="Genomic_DNA"/>
</dbReference>
<dbReference type="EMBL" id="AY803268">
    <property type="protein sequence ID" value="AAX39309.1"/>
    <property type="molecule type" value="mRNA"/>
</dbReference>
<dbReference type="RefSeq" id="NP_001031753.1">
    <property type="nucleotide sequence ID" value="NM_001036676.2"/>
</dbReference>
<dbReference type="SMR" id="P82775"/>
<dbReference type="PaxDb" id="3702-AT4G30064.1"/>
<dbReference type="EnsemblPlants" id="AT4G30064.1">
    <property type="protein sequence ID" value="AT4G30064.1"/>
    <property type="gene ID" value="AT4G30064"/>
</dbReference>
<dbReference type="GeneID" id="3770558"/>
<dbReference type="Gramene" id="AT4G30064.1">
    <property type="protein sequence ID" value="AT4G30064.1"/>
    <property type="gene ID" value="AT4G30064"/>
</dbReference>
<dbReference type="KEGG" id="ath:AT4G30064"/>
<dbReference type="Araport" id="AT4G30064"/>
<dbReference type="TAIR" id="AT4G30064">
    <property type="gene designation" value="LCR61"/>
</dbReference>
<dbReference type="HOGENOM" id="CLU_196273_0_0_1"/>
<dbReference type="InParanoid" id="P82775"/>
<dbReference type="OMA" id="AGRCICT"/>
<dbReference type="OrthoDB" id="1024054at2759"/>
<dbReference type="PhylomeDB" id="P82775"/>
<dbReference type="PRO" id="PR:P82775"/>
<dbReference type="Proteomes" id="UP000006548">
    <property type="component" value="Chromosome 4"/>
</dbReference>
<dbReference type="ExpressionAtlas" id="P82775">
    <property type="expression patterns" value="baseline and differential"/>
</dbReference>
<dbReference type="GO" id="GO:0005576">
    <property type="term" value="C:extracellular region"/>
    <property type="evidence" value="ECO:0007669"/>
    <property type="project" value="UniProtKB-SubCell"/>
</dbReference>
<dbReference type="GO" id="GO:0050832">
    <property type="term" value="P:defense response to fungus"/>
    <property type="evidence" value="ECO:0007669"/>
    <property type="project" value="UniProtKB-KW"/>
</dbReference>
<dbReference type="GO" id="GO:0031640">
    <property type="term" value="P:killing of cells of another organism"/>
    <property type="evidence" value="ECO:0007669"/>
    <property type="project" value="UniProtKB-KW"/>
</dbReference>
<dbReference type="InterPro" id="IPR039641">
    <property type="entry name" value="LCR"/>
</dbReference>
<dbReference type="PANTHER" id="PTHR36788:SF3">
    <property type="entry name" value="DEFENSIN-LIKE PROTEIN 171-RELATED"/>
    <property type="match status" value="1"/>
</dbReference>
<dbReference type="PANTHER" id="PTHR36788">
    <property type="entry name" value="DEFENSIN-LIKE PROTEIN 183"/>
    <property type="match status" value="1"/>
</dbReference>
<keyword id="KW-0929">Antimicrobial</keyword>
<keyword id="KW-1015">Disulfide bond</keyword>
<keyword id="KW-0295">Fungicide</keyword>
<keyword id="KW-0611">Plant defense</keyword>
<keyword id="KW-1185">Reference proteome</keyword>
<keyword id="KW-0964">Secreted</keyword>
<keyword id="KW-0732">Signal</keyword>
<feature type="signal peptide" evidence="2">
    <location>
        <begin position="1"/>
        <end position="23"/>
    </location>
</feature>
<feature type="chain" id="PRO_0000017299" description="Defensin-like protein 171">
    <location>
        <begin position="24"/>
        <end position="78"/>
    </location>
</feature>
<feature type="disulfide bond" evidence="1">
    <location>
        <begin position="27"/>
        <end position="71"/>
    </location>
</feature>
<feature type="disulfide bond" evidence="1">
    <location>
        <begin position="34"/>
        <end position="56"/>
    </location>
</feature>
<feature type="disulfide bond" evidence="1">
    <location>
        <begin position="40"/>
        <end position="65"/>
    </location>
</feature>
<feature type="disulfide bond" evidence="1">
    <location>
        <begin position="44"/>
        <end position="67"/>
    </location>
</feature>
<protein>
    <recommendedName>
        <fullName>Defensin-like protein 171</fullName>
    </recommendedName>
    <alternativeName>
        <fullName>Low-molecular-weight cysteine-rich protein 61</fullName>
        <shortName>Protein LCR61</shortName>
    </alternativeName>
</protein>
<reference evidence="4" key="1">
    <citation type="journal article" date="1999" name="Nature">
        <title>Sequence and analysis of chromosome 4 of the plant Arabidopsis thaliana.</title>
        <authorList>
            <person name="Mayer K.F.X."/>
            <person name="Schueller C."/>
            <person name="Wambutt R."/>
            <person name="Murphy G."/>
            <person name="Volckaert G."/>
            <person name="Pohl T."/>
            <person name="Duesterhoeft A."/>
            <person name="Stiekema W."/>
            <person name="Entian K.-D."/>
            <person name="Terryn N."/>
            <person name="Harris B."/>
            <person name="Ansorge W."/>
            <person name="Brandt P."/>
            <person name="Grivell L.A."/>
            <person name="Rieger M."/>
            <person name="Weichselgartner M."/>
            <person name="de Simone V."/>
            <person name="Obermaier B."/>
            <person name="Mache R."/>
            <person name="Mueller M."/>
            <person name="Kreis M."/>
            <person name="Delseny M."/>
            <person name="Puigdomenech P."/>
            <person name="Watson M."/>
            <person name="Schmidtheini T."/>
            <person name="Reichert B."/>
            <person name="Portetelle D."/>
            <person name="Perez-Alonso M."/>
            <person name="Boutry M."/>
            <person name="Bancroft I."/>
            <person name="Vos P."/>
            <person name="Hoheisel J."/>
            <person name="Zimmermann W."/>
            <person name="Wedler H."/>
            <person name="Ridley P."/>
            <person name="Langham S.-A."/>
            <person name="McCullagh B."/>
            <person name="Bilham L."/>
            <person name="Robben J."/>
            <person name="van der Schueren J."/>
            <person name="Grymonprez B."/>
            <person name="Chuang Y.-J."/>
            <person name="Vandenbussche F."/>
            <person name="Braeken M."/>
            <person name="Weltjens I."/>
            <person name="Voet M."/>
            <person name="Bastiaens I."/>
            <person name="Aert R."/>
            <person name="Defoor E."/>
            <person name="Weitzenegger T."/>
            <person name="Bothe G."/>
            <person name="Ramsperger U."/>
            <person name="Hilbert H."/>
            <person name="Braun M."/>
            <person name="Holzer E."/>
            <person name="Brandt A."/>
            <person name="Peters S."/>
            <person name="van Staveren M."/>
            <person name="Dirkse W."/>
            <person name="Mooijman P."/>
            <person name="Klein Lankhorst R."/>
            <person name="Rose M."/>
            <person name="Hauf J."/>
            <person name="Koetter P."/>
            <person name="Berneiser S."/>
            <person name="Hempel S."/>
            <person name="Feldpausch M."/>
            <person name="Lamberth S."/>
            <person name="Van den Daele H."/>
            <person name="De Keyser A."/>
            <person name="Buysshaert C."/>
            <person name="Gielen J."/>
            <person name="Villarroel R."/>
            <person name="De Clercq R."/>
            <person name="van Montagu M."/>
            <person name="Rogers J."/>
            <person name="Cronin A."/>
            <person name="Quail M.A."/>
            <person name="Bray-Allen S."/>
            <person name="Clark L."/>
            <person name="Doggett J."/>
            <person name="Hall S."/>
            <person name="Kay M."/>
            <person name="Lennard N."/>
            <person name="McLay K."/>
            <person name="Mayes R."/>
            <person name="Pettett A."/>
            <person name="Rajandream M.A."/>
            <person name="Lyne M."/>
            <person name="Benes V."/>
            <person name="Rechmann S."/>
            <person name="Borkova D."/>
            <person name="Bloecker H."/>
            <person name="Scharfe M."/>
            <person name="Grimm M."/>
            <person name="Loehnert T.-H."/>
            <person name="Dose S."/>
            <person name="de Haan M."/>
            <person name="Maarse A.C."/>
            <person name="Schaefer M."/>
            <person name="Mueller-Auer S."/>
            <person name="Gabel C."/>
            <person name="Fuchs M."/>
            <person name="Fartmann B."/>
            <person name="Granderath K."/>
            <person name="Dauner D."/>
            <person name="Herzl A."/>
            <person name="Neumann S."/>
            <person name="Argiriou A."/>
            <person name="Vitale D."/>
            <person name="Liguori R."/>
            <person name="Piravandi E."/>
            <person name="Massenet O."/>
            <person name="Quigley F."/>
            <person name="Clabauld G."/>
            <person name="Muendlein A."/>
            <person name="Felber R."/>
            <person name="Schnabl S."/>
            <person name="Hiller R."/>
            <person name="Schmidt W."/>
            <person name="Lecharny A."/>
            <person name="Aubourg S."/>
            <person name="Chefdor F."/>
            <person name="Cooke R."/>
            <person name="Berger C."/>
            <person name="Monfort A."/>
            <person name="Casacuberta E."/>
            <person name="Gibbons T."/>
            <person name="Weber N."/>
            <person name="Vandenbol M."/>
            <person name="Bargues M."/>
            <person name="Terol J."/>
            <person name="Torres A."/>
            <person name="Perez-Perez A."/>
            <person name="Purnelle B."/>
            <person name="Bent E."/>
            <person name="Johnson S."/>
            <person name="Tacon D."/>
            <person name="Jesse T."/>
            <person name="Heijnen L."/>
            <person name="Schwarz S."/>
            <person name="Scholler P."/>
            <person name="Heber S."/>
            <person name="Francs P."/>
            <person name="Bielke C."/>
            <person name="Frishman D."/>
            <person name="Haase D."/>
            <person name="Lemcke K."/>
            <person name="Mewes H.-W."/>
            <person name="Stocker S."/>
            <person name="Zaccaria P."/>
            <person name="Bevan M."/>
            <person name="Wilson R.K."/>
            <person name="de la Bastide M."/>
            <person name="Habermann K."/>
            <person name="Parnell L."/>
            <person name="Dedhia N."/>
            <person name="Gnoj L."/>
            <person name="Schutz K."/>
            <person name="Huang E."/>
            <person name="Spiegel L."/>
            <person name="Sekhon M."/>
            <person name="Murray J."/>
            <person name="Sheet P."/>
            <person name="Cordes M."/>
            <person name="Abu-Threideh J."/>
            <person name="Stoneking T."/>
            <person name="Kalicki J."/>
            <person name="Graves T."/>
            <person name="Harmon G."/>
            <person name="Edwards J."/>
            <person name="Latreille P."/>
            <person name="Courtney L."/>
            <person name="Cloud J."/>
            <person name="Abbott A."/>
            <person name="Scott K."/>
            <person name="Johnson D."/>
            <person name="Minx P."/>
            <person name="Bentley D."/>
            <person name="Fulton B."/>
            <person name="Miller N."/>
            <person name="Greco T."/>
            <person name="Kemp K."/>
            <person name="Kramer J."/>
            <person name="Fulton L."/>
            <person name="Mardis E."/>
            <person name="Dante M."/>
            <person name="Pepin K."/>
            <person name="Hillier L.W."/>
            <person name="Nelson J."/>
            <person name="Spieth J."/>
            <person name="Ryan E."/>
            <person name="Andrews S."/>
            <person name="Geisel C."/>
            <person name="Layman D."/>
            <person name="Du H."/>
            <person name="Ali J."/>
            <person name="Berghoff A."/>
            <person name="Jones K."/>
            <person name="Drone K."/>
            <person name="Cotton M."/>
            <person name="Joshu C."/>
            <person name="Antonoiu B."/>
            <person name="Zidanic M."/>
            <person name="Strong C."/>
            <person name="Sun H."/>
            <person name="Lamar B."/>
            <person name="Yordan C."/>
            <person name="Ma P."/>
            <person name="Zhong J."/>
            <person name="Preston R."/>
            <person name="Vil D."/>
            <person name="Shekher M."/>
            <person name="Matero A."/>
            <person name="Shah R."/>
            <person name="Swaby I.K."/>
            <person name="O'Shaughnessy A."/>
            <person name="Rodriguez M."/>
            <person name="Hoffman J."/>
            <person name="Till S."/>
            <person name="Granat S."/>
            <person name="Shohdy N."/>
            <person name="Hasegawa A."/>
            <person name="Hameed A."/>
            <person name="Lodhi M."/>
            <person name="Johnson A."/>
            <person name="Chen E."/>
            <person name="Marra M.A."/>
            <person name="Martienssen R."/>
            <person name="McCombie W.R."/>
        </authorList>
    </citation>
    <scope>NUCLEOTIDE SEQUENCE [LARGE SCALE GENOMIC DNA]</scope>
    <source>
        <strain evidence="3">cv. Columbia</strain>
    </source>
</reference>
<reference key="2">
    <citation type="journal article" date="2017" name="Plant J.">
        <title>Araport11: a complete reannotation of the Arabidopsis thaliana reference genome.</title>
        <authorList>
            <person name="Cheng C.Y."/>
            <person name="Krishnakumar V."/>
            <person name="Chan A.P."/>
            <person name="Thibaud-Nissen F."/>
            <person name="Schobel S."/>
            <person name="Town C.D."/>
        </authorList>
    </citation>
    <scope>GENOME REANNOTATION</scope>
    <source>
        <strain>cv. Columbia</strain>
    </source>
</reference>
<reference key="3">
    <citation type="journal article" date="2005" name="Plant Physiol.">
        <title>Genome organization of more than 300 defensin-like genes in Arabidopsis.</title>
        <authorList>
            <person name="Silverstein K.A.T."/>
            <person name="Graham M.A."/>
            <person name="Paape T.D."/>
            <person name="VandenBosch K.A."/>
        </authorList>
    </citation>
    <scope>NUCLEOTIDE SEQUENCE [MRNA] OF 1-57</scope>
    <scope>GENE FAMILY</scope>
</reference>
<reference evidence="4" key="4">
    <citation type="journal article" date="2001" name="Plant Mol. Biol.">
        <title>Two large Arabidopsis thaliana gene families are homologous to the Brassica gene superfamily that encodes pollen coat proteins and the male component of the self-incompatibility response.</title>
        <authorList>
            <person name="Vanoosthuyse V."/>
            <person name="Miege C."/>
            <person name="Dumas C."/>
            <person name="Cock J.M."/>
        </authorList>
    </citation>
    <scope>IDENTIFICATION</scope>
</reference>
<gene>
    <name type="primary">LCR61</name>
    <name type="ordered locus">At4g30064</name>
    <name type="ORF">F6G3</name>
</gene>
<sequence>MAKTASSLVLPIIFLVMFALVEQNMGCMAVLGSCGVITDCSGECISRFGPQARGYCDRDGGSGTCVCVYPCPADKPHM</sequence>
<evidence type="ECO:0000250" key="1"/>
<evidence type="ECO:0000255" key="2"/>
<evidence type="ECO:0000269" key="3">
    <source>
    </source>
</evidence>
<evidence type="ECO:0000305" key="4"/>
<organism evidence="4">
    <name type="scientific">Arabidopsis thaliana</name>
    <name type="common">Mouse-ear cress</name>
    <dbReference type="NCBI Taxonomy" id="3702"/>
    <lineage>
        <taxon>Eukaryota</taxon>
        <taxon>Viridiplantae</taxon>
        <taxon>Streptophyta</taxon>
        <taxon>Embryophyta</taxon>
        <taxon>Tracheophyta</taxon>
        <taxon>Spermatophyta</taxon>
        <taxon>Magnoliopsida</taxon>
        <taxon>eudicotyledons</taxon>
        <taxon>Gunneridae</taxon>
        <taxon>Pentapetalae</taxon>
        <taxon>rosids</taxon>
        <taxon>malvids</taxon>
        <taxon>Brassicales</taxon>
        <taxon>Brassicaceae</taxon>
        <taxon>Camelineae</taxon>
        <taxon>Arabidopsis</taxon>
    </lineage>
</organism>